<reference key="1">
    <citation type="journal article" date="2009" name="Genome Res.">
        <title>Comparative genomics of the fungal pathogens Candida dubliniensis and Candida albicans.</title>
        <authorList>
            <person name="Jackson A.P."/>
            <person name="Gamble J.A."/>
            <person name="Yeomans T."/>
            <person name="Moran G.P."/>
            <person name="Saunders D."/>
            <person name="Harris D."/>
            <person name="Aslett M."/>
            <person name="Barrell J.F."/>
            <person name="Butler G."/>
            <person name="Citiulo F."/>
            <person name="Coleman D.C."/>
            <person name="de Groot P.W.J."/>
            <person name="Goodwin T.J."/>
            <person name="Quail M.A."/>
            <person name="McQuillan J."/>
            <person name="Munro C.A."/>
            <person name="Pain A."/>
            <person name="Poulter R.T."/>
            <person name="Rajandream M.A."/>
            <person name="Renauld H."/>
            <person name="Spiering M.J."/>
            <person name="Tivey A."/>
            <person name="Gow N.A.R."/>
            <person name="Barrell B."/>
            <person name="Sullivan D.J."/>
            <person name="Berriman M."/>
        </authorList>
    </citation>
    <scope>NUCLEOTIDE SEQUENCE [LARGE SCALE GENOMIC DNA]</scope>
    <source>
        <strain>CD36 / ATCC MYA-646 / CBS 7987 / NCPF 3949 / NRRL Y-17841</strain>
    </source>
</reference>
<protein>
    <recommendedName>
        <fullName evidence="1">Mitochondrial distribution and morphology protein 10</fullName>
    </recommendedName>
    <alternativeName>
        <fullName evidence="1">Mitochondrial inheritance component MDM10</fullName>
    </alternativeName>
</protein>
<evidence type="ECO:0000255" key="1">
    <source>
        <dbReference type="HAMAP-Rule" id="MF_03102"/>
    </source>
</evidence>
<name>MDM10_CANDC</name>
<organism>
    <name type="scientific">Candida dubliniensis (strain CD36 / ATCC MYA-646 / CBS 7987 / NCPF 3949 / NRRL Y-17841)</name>
    <name type="common">Yeast</name>
    <dbReference type="NCBI Taxonomy" id="573826"/>
    <lineage>
        <taxon>Eukaryota</taxon>
        <taxon>Fungi</taxon>
        <taxon>Dikarya</taxon>
        <taxon>Ascomycota</taxon>
        <taxon>Saccharomycotina</taxon>
        <taxon>Pichiomycetes</taxon>
        <taxon>Debaryomycetaceae</taxon>
        <taxon>Candida/Lodderomyces clade</taxon>
        <taxon>Candida</taxon>
    </lineage>
</organism>
<dbReference type="EMBL" id="FM992689">
    <property type="protein sequence ID" value="CAX43716.1"/>
    <property type="molecule type" value="Genomic_DNA"/>
</dbReference>
<dbReference type="RefSeq" id="XP_002418415.1">
    <property type="nucleotide sequence ID" value="XM_002418370.1"/>
</dbReference>
<dbReference type="SMR" id="B9WBE5"/>
<dbReference type="GeneID" id="8045967"/>
<dbReference type="KEGG" id="cdu:CD36_19360"/>
<dbReference type="CGD" id="CAL0000160253">
    <property type="gene designation" value="Cd36_19360"/>
</dbReference>
<dbReference type="VEuPathDB" id="FungiDB:CD36_19360"/>
<dbReference type="eggNOG" id="ENOG502QUN5">
    <property type="taxonomic scope" value="Eukaryota"/>
</dbReference>
<dbReference type="HOGENOM" id="CLU_026505_0_0_1"/>
<dbReference type="OrthoDB" id="2103793at2759"/>
<dbReference type="Proteomes" id="UP000002605">
    <property type="component" value="Chromosome 2"/>
</dbReference>
<dbReference type="GO" id="GO:0032865">
    <property type="term" value="C:ERMES complex"/>
    <property type="evidence" value="ECO:0007669"/>
    <property type="project" value="UniProtKB-UniRule"/>
</dbReference>
<dbReference type="GO" id="GO:0001401">
    <property type="term" value="C:SAM complex"/>
    <property type="evidence" value="ECO:0007669"/>
    <property type="project" value="TreeGrafter"/>
</dbReference>
<dbReference type="GO" id="GO:0051654">
    <property type="term" value="P:establishment of mitochondrion localization"/>
    <property type="evidence" value="ECO:0007669"/>
    <property type="project" value="TreeGrafter"/>
</dbReference>
<dbReference type="GO" id="GO:0000002">
    <property type="term" value="P:mitochondrial genome maintenance"/>
    <property type="evidence" value="ECO:0007669"/>
    <property type="project" value="UniProtKB-UniRule"/>
</dbReference>
<dbReference type="GO" id="GO:0070096">
    <property type="term" value="P:mitochondrial outer membrane translocase complex assembly"/>
    <property type="evidence" value="ECO:0007669"/>
    <property type="project" value="UniProtKB-UniRule"/>
</dbReference>
<dbReference type="GO" id="GO:1990456">
    <property type="term" value="P:mitochondrion-endoplasmic reticulum membrane tethering"/>
    <property type="evidence" value="ECO:0007669"/>
    <property type="project" value="UniProtKB-UniRule"/>
</dbReference>
<dbReference type="GO" id="GO:0015914">
    <property type="term" value="P:phospholipid transport"/>
    <property type="evidence" value="ECO:0007669"/>
    <property type="project" value="TreeGrafter"/>
</dbReference>
<dbReference type="GO" id="GO:0045040">
    <property type="term" value="P:protein insertion into mitochondrial outer membrane"/>
    <property type="evidence" value="ECO:0007669"/>
    <property type="project" value="UniProtKB-UniRule"/>
</dbReference>
<dbReference type="HAMAP" id="MF_03102">
    <property type="entry name" value="Mdm10"/>
    <property type="match status" value="1"/>
</dbReference>
<dbReference type="InterPro" id="IPR027539">
    <property type="entry name" value="Mdm10"/>
</dbReference>
<dbReference type="PANTHER" id="PTHR28035">
    <property type="entry name" value="MITOCHONDRIAL DISTRIBUTION AND MORPHOLOGY PROTEIN 10"/>
    <property type="match status" value="1"/>
</dbReference>
<dbReference type="PANTHER" id="PTHR28035:SF1">
    <property type="entry name" value="MITOCHONDRIAL DISTRIBUTION AND MORPHOLOGY PROTEIN 10"/>
    <property type="match status" value="1"/>
</dbReference>
<dbReference type="Pfam" id="PF12519">
    <property type="entry name" value="MDM10"/>
    <property type="match status" value="1"/>
</dbReference>
<proteinExistence type="inferred from homology"/>
<comment type="function">
    <text evidence="1">Component of the ERMES/MDM complex, which serves as a molecular tether to connect the endoplasmic reticulum and mitochondria. Components of this complex are involved in the control of mitochondrial shape and protein biogenesis and may function in phospholipid exchange. MDM10 is involved in the late assembly steps of the general translocase of the mitochondrial outer membrane (TOM complex). Functions in the TOM40-specific route of the assembly of outer membrane beta-barrel proteins, including the association of TOM40 with the receptor TOM22 and small TOM proteins. Can associate with the SAM(core) complex as well as the MDM12-MMM1 complex, both involved in late steps of the major beta-barrel assembly pathway, that is responsible for biogenesis of all outer membrane beta-barrel proteins. May act as a switch that shuttles between both complexes and channels precursor proteins into the TOM40-specific pathway. Plays a role in mitochondrial morphology and in the inheritance of mitochondria.</text>
</comment>
<comment type="subunit">
    <text evidence="1">Component of the ER-mitochondria encounter structure (ERMES) or MDM complex, composed of MMM1, MDM10, MDM12 and MDM34. Associates with the mitochondrial outer membrane sorting assembly machinery SAM(core) complex.</text>
</comment>
<comment type="subcellular location">
    <subcellularLocation>
        <location evidence="1">Mitochondrion outer membrane</location>
        <topology evidence="1">Multi-pass membrane protein</topology>
    </subcellularLocation>
    <text evidence="1">The ERMES/MDM complex localizes to a few discrete foci (around 10 per single cell), that represent mitochondria-endoplasmic reticulum junctions. These foci are often found next to mtDNA nucleoids.</text>
</comment>
<comment type="domain">
    <text>Lacks alpha-helical transmembrane segments, suggesting that it resides in the membrane via beta-sheet conformations similar to those predicted for other outer membrane proteins and porin.</text>
</comment>
<comment type="similarity">
    <text evidence="1">Belongs to the MDM10 family.</text>
</comment>
<keyword id="KW-0472">Membrane</keyword>
<keyword id="KW-0496">Mitochondrion</keyword>
<keyword id="KW-1000">Mitochondrion outer membrane</keyword>
<keyword id="KW-0812">Transmembrane</keyword>
<keyword id="KW-1134">Transmembrane beta strand</keyword>
<feature type="chain" id="PRO_0000384170" description="Mitochondrial distribution and morphology protein 10">
    <location>
        <begin position="1"/>
        <end position="463"/>
    </location>
</feature>
<gene>
    <name evidence="1" type="primary">MDM10</name>
    <name type="ORF">CD36_19360</name>
</gene>
<accession>B9WBE5</accession>
<sequence length="463" mass="51921">MYTYMEYLQKCFYKSTNWNEDNIYSNITATSQALLDFPIPNGFKIDSSSKTTDYSASSFTLSNHHQINGSLAYLYSSIPLTNTMGTKDVSLQDAIAGFRIIEPSVGLSSKLTNNIIQNRSSLLYGRMYFPGSALEAMIIKRITKNSQLLIKCVNNPHLEKNGTMIVYLQNNTAKYSRELIYSTNEALIGLRCLYNLGNDATSHNFPHVNPAVIPKFDNSVISIGTELWYAARTMSPGLSAALRYSTRSTSTGKPLTMTLAINPIVGHISSTYTVKTSVASTFCSKYDFNVFSYASNLSLGFELYSYANKKKNTFPSFEHHEIYSSSEENKYLKKHPELQRHHRVPIKSHKYQGNRTIINPIQNLDNVYHINPTLLSSTTNSPTNNDNSNTSETVTAAFQNLVNESDFSSVFKFSTSLNDKVVKILWEGRLKDFLVSTGVKLSLNPITNTPEFNKLGISFSYAL</sequence>